<accession>D2Y240</accession>
<proteinExistence type="evidence at protein level"/>
<name>H8A01_CYRHA</name>
<evidence type="ECO:0000250" key="1"/>
<evidence type="ECO:0000250" key="2">
    <source>
        <dbReference type="UniProtKB" id="B3FIS6"/>
    </source>
</evidence>
<evidence type="ECO:0000255" key="3"/>
<evidence type="ECO:0000269" key="4">
    <source>
    </source>
</evidence>
<evidence type="ECO:0000305" key="5"/>
<dbReference type="EMBL" id="GU292917">
    <property type="protein sequence ID" value="ADB56733.1"/>
    <property type="molecule type" value="mRNA"/>
</dbReference>
<dbReference type="EMBL" id="GU293096">
    <property type="protein sequence ID" value="ADB56912.1"/>
    <property type="molecule type" value="Genomic_DNA"/>
</dbReference>
<dbReference type="SMR" id="D2Y240"/>
<dbReference type="ArachnoServer" id="AS001657">
    <property type="toxin name" value="U3-theraphotoxin-Hhn1a"/>
</dbReference>
<dbReference type="GO" id="GO:0005576">
    <property type="term" value="C:extracellular region"/>
    <property type="evidence" value="ECO:0007669"/>
    <property type="project" value="UniProtKB-SubCell"/>
</dbReference>
<dbReference type="GO" id="GO:0008200">
    <property type="term" value="F:ion channel inhibitor activity"/>
    <property type="evidence" value="ECO:0007669"/>
    <property type="project" value="InterPro"/>
</dbReference>
<dbReference type="GO" id="GO:0090729">
    <property type="term" value="F:toxin activity"/>
    <property type="evidence" value="ECO:0007669"/>
    <property type="project" value="UniProtKB-KW"/>
</dbReference>
<dbReference type="InterPro" id="IPR011696">
    <property type="entry name" value="Huwentoxin-1"/>
</dbReference>
<dbReference type="InterPro" id="IPR013140">
    <property type="entry name" value="Huwentoxin_CS1"/>
</dbReference>
<dbReference type="Pfam" id="PF07740">
    <property type="entry name" value="Toxin_12"/>
    <property type="match status" value="1"/>
</dbReference>
<dbReference type="SUPFAM" id="SSF57059">
    <property type="entry name" value="omega toxin-like"/>
    <property type="match status" value="1"/>
</dbReference>
<dbReference type="PROSITE" id="PS60021">
    <property type="entry name" value="HWTX_1"/>
    <property type="match status" value="1"/>
</dbReference>
<protein>
    <recommendedName>
        <fullName>U3-theraphotoxin-Hhn1a 1</fullName>
        <shortName>U3-TRTX-Hhn1a</shortName>
    </recommendedName>
    <alternativeName>
        <fullName>Hainantoxin-VIII</fullName>
        <shortName>HNTX-VIII</shortName>
    </alternativeName>
    <alternativeName>
        <fullName>Peptide F4-27.90</fullName>
    </alternativeName>
</protein>
<reference key="1">
    <citation type="journal article" date="2010" name="J. Proteome Res.">
        <title>Molecular diversification of peptide toxins from the tarantula Haplopelma hainanum (Ornithoctonus hainana) venom based on transcriptomic, peptidomic, and genomic analyses.</title>
        <authorList>
            <person name="Tang X."/>
            <person name="Zhang Y."/>
            <person name="Hu W."/>
            <person name="Xu D."/>
            <person name="Tao H."/>
            <person name="Yang X."/>
            <person name="Li Y."/>
            <person name="Jiang L."/>
            <person name="Liang S."/>
        </authorList>
    </citation>
    <scope>NUCLEOTIDE SEQUENCE [LARGE SCALE GENOMIC DNA / MRNA]</scope>
    <scope>PROTEIN SEQUENCE OF 53-85</scope>
    <scope>IDENTIFICATION BY MASS SPECTROMETRY</scope>
    <source>
        <tissue>Venom</tissue>
        <tissue>Venom gland</tissue>
    </source>
</reference>
<feature type="signal peptide" evidence="3">
    <location>
        <begin position="1"/>
        <end position="24"/>
    </location>
</feature>
<feature type="propeptide" id="PRO_0000400579" evidence="4">
    <location>
        <begin position="25"/>
        <end position="52"/>
    </location>
</feature>
<feature type="peptide" id="PRO_0000400580" description="U3-theraphotoxin-Hhn1a 1">
    <location>
        <begin position="53"/>
        <end position="87"/>
    </location>
</feature>
<feature type="disulfide bond" evidence="2">
    <location>
        <begin position="54"/>
        <end position="67"/>
    </location>
</feature>
<feature type="disulfide bond" evidence="2">
    <location>
        <begin position="61"/>
        <end position="72"/>
    </location>
</feature>
<feature type="disulfide bond" evidence="2">
    <location>
        <begin position="66"/>
        <end position="79"/>
    </location>
</feature>
<keyword id="KW-0903">Direct protein sequencing</keyword>
<keyword id="KW-1015">Disulfide bond</keyword>
<keyword id="KW-0872">Ion channel impairing toxin</keyword>
<keyword id="KW-0960">Knottin</keyword>
<keyword id="KW-0964">Secreted</keyword>
<keyword id="KW-0732">Signal</keyword>
<keyword id="KW-0800">Toxin</keyword>
<sequence>MVNMKASMFLTFAGLVLLFVVCYASESEEKEFPKEMLSSIFAVDNDFKQEERDCAGYMRECKEKLCCSGYVCSSRWKWCVLPAPWRR</sequence>
<comment type="function">
    <text evidence="1">Ion channel inhibitor.</text>
</comment>
<comment type="subcellular location">
    <subcellularLocation>
        <location>Secreted</location>
    </subcellularLocation>
</comment>
<comment type="tissue specificity">
    <text>Expressed by the venom gland.</text>
</comment>
<comment type="domain">
    <text evidence="1">The presence of a 'disulfide through disulfide knot' structurally defines this protein as a knottin.</text>
</comment>
<comment type="similarity">
    <text evidence="5">Belongs to the neurotoxin 10 (Hwtx-1) family. 51 (Hntx-8) subfamily. Hntx-8 sub-subfamily.</text>
</comment>
<organism>
    <name type="scientific">Cyriopagopus hainanus</name>
    <name type="common">Chinese bird spider</name>
    <name type="synonym">Haplopelma hainanum</name>
    <dbReference type="NCBI Taxonomy" id="209901"/>
    <lineage>
        <taxon>Eukaryota</taxon>
        <taxon>Metazoa</taxon>
        <taxon>Ecdysozoa</taxon>
        <taxon>Arthropoda</taxon>
        <taxon>Chelicerata</taxon>
        <taxon>Arachnida</taxon>
        <taxon>Araneae</taxon>
        <taxon>Mygalomorphae</taxon>
        <taxon>Theraphosidae</taxon>
        <taxon>Haplopelma</taxon>
    </lineage>
</organism>